<protein>
    <recommendedName>
        <fullName>Suppressor of tumorigenicity 7 protein</fullName>
    </recommendedName>
    <alternativeName>
        <fullName>mRay</fullName>
    </alternativeName>
</protein>
<accession>Q99M96</accession>
<accession>Q3UA20</accession>
<accession>Q6Q9W2</accession>
<accession>Q6Q9W3</accession>
<accession>Q8R3T3</accession>
<accession>Q921F6</accession>
<accession>Q99M89</accession>
<accession>Q99M90</accession>
<accession>Q99M91</accession>
<accession>Q99M92</accession>
<accession>Q99M93</accession>
<accession>Q99M94</accession>
<accession>Q9JID7</accession>
<accession>Q9JID8</accession>
<feature type="chain" id="PRO_0000339207" description="Suppressor of tumorigenicity 7 protein">
    <location>
        <begin position="1"/>
        <end position="577"/>
    </location>
</feature>
<feature type="transmembrane region" description="Helical" evidence="2">
    <location>
        <begin position="15"/>
        <end position="35"/>
    </location>
</feature>
<feature type="transmembrane region" description="Helical" evidence="2">
    <location>
        <begin position="62"/>
        <end position="82"/>
    </location>
</feature>
<feature type="transmembrane region" description="Helical" evidence="2">
    <location>
        <begin position="512"/>
        <end position="532"/>
    </location>
</feature>
<feature type="transmembrane region" description="Helical" evidence="2">
    <location>
        <begin position="539"/>
        <end position="559"/>
    </location>
</feature>
<feature type="modified residue" description="Phosphoserine" evidence="1">
    <location>
        <position position="386"/>
    </location>
</feature>
<feature type="glycosylation site" description="N-linked (GlcNAc...) asparagine" evidence="2">
    <location>
        <position position="47"/>
    </location>
</feature>
<feature type="splice variant" id="VSP_034118" description="In isoform 4 and isoform 5." evidence="4">
    <original>MAEAGAGFLEQLKSCIVWSWTYLWTVWFFLVLFLVYILRVPLRINDNLSTV</original>
    <variation>MQEGKQITCSHVKLLPSRLPEHAFM</variation>
    <location>
        <begin position="1"/>
        <end position="51"/>
    </location>
</feature>
<feature type="splice variant" id="VSP_034119" description="In isoform 8 and isoform 9." evidence="3 4 5 6 7 8">
    <location>
        <begin position="1"/>
        <end position="26"/>
    </location>
</feature>
<feature type="splice variant" id="VSP_034120" description="In isoform 6 and isoform 7." evidence="4">
    <location>
        <begin position="1"/>
        <end position="19"/>
    </location>
</feature>
<feature type="splice variant" id="VSP_034121" description="In isoform 6 and isoform 7." evidence="4">
    <original>WTYLWTVWFFLVLFLVYILRVPLRINDNLST</original>
    <variation>MKYA</variation>
    <location>
        <begin position="20"/>
        <end position="50"/>
    </location>
</feature>
<feature type="splice variant" id="VSP_034122" description="In isoform 8 and isoform 9." evidence="3 4 5 6 7 8">
    <original>WFFLVLFLVYILRVPLRINDNLSTV</original>
    <variation>MFGTESSL</variation>
    <location>
        <begin position="27"/>
        <end position="51"/>
    </location>
</feature>
<feature type="splice variant" id="VSP_034123" description="In isoform 3, isoform 4, isoform 7 and isoform 9." evidence="3 4 5 6 7 8">
    <location>
        <begin position="215"/>
        <end position="237"/>
    </location>
</feature>
<feature type="splice variant" id="VSP_034124" description="In isoform 2." evidence="5">
    <original>CTWEGT</original>
    <variation>S</variation>
    <location>
        <begin position="464"/>
        <end position="469"/>
    </location>
</feature>
<feature type="sequence conflict" description="In Ref. 2; AAG24465/AAG24464." evidence="9" ref="2">
    <original>R</original>
    <variation>C</variation>
    <location>
        <position position="102"/>
    </location>
</feature>
<feature type="sequence conflict" description="In Ref. 4; BAE30495." evidence="9" ref="4">
    <original>R</original>
    <variation>G</variation>
    <location>
        <position position="308"/>
    </location>
</feature>
<proteinExistence type="evidence at transcript level"/>
<keyword id="KW-0025">Alternative splicing</keyword>
<keyword id="KW-0325">Glycoprotein</keyword>
<keyword id="KW-0472">Membrane</keyword>
<keyword id="KW-0597">Phosphoprotein</keyword>
<keyword id="KW-1185">Reference proteome</keyword>
<keyword id="KW-0812">Transmembrane</keyword>
<keyword id="KW-1133">Transmembrane helix</keyword>
<reference key="1">
    <citation type="journal article" date="2000" name="Am. J. Hum. Genet.">
        <title>Identification of a novel gene on chromosome 7q31 that is interrupted by a translocation breakpoint in an autistic individual.</title>
        <authorList>
            <person name="Vincent J.B."/>
            <person name="Herbrick J.-A."/>
            <person name="Gurling H.M.D."/>
            <person name="Bolton P.F."/>
            <person name="Roberts W."/>
            <person name="Scherer S.W."/>
        </authorList>
    </citation>
    <scope>NUCLEOTIDE SEQUENCE [MRNA] (ISOFORMS 8 AND 9)</scope>
</reference>
<reference key="2">
    <citation type="journal article" date="2001" name="Nat. Genet.">
        <title>Mutational and functional analyses reveal that ST7 is a highly conserved tumor-suppressor gene on human chromosome 7q31.</title>
        <authorList>
            <person name="Zenklusen J.C."/>
            <person name="Conti C.J."/>
            <person name="Green E.D."/>
        </authorList>
    </citation>
    <scope>NUCLEOTIDE SEQUENCE [MRNA] (ISOFORMS 1; 4; 5; 6; 7; 8 AND 9)</scope>
    <source>
        <strain>BALB/cJ</strain>
    </source>
</reference>
<reference key="3">
    <citation type="journal article" date="2005" name="Oncogene">
        <title>Met proto-oncogene juxtamembrane rare variations in mouse and humans: differential effects of Arg and Cys alleles on mouse lung tumorigenesis.</title>
        <authorList>
            <person name="Zaffaroni D."/>
            <person name="Spinola M."/>
            <person name="Galvan A."/>
            <person name="Falvella F.S."/>
            <person name="Pazzaglia S."/>
            <person name="Saran A."/>
            <person name="Mancuso M.T."/>
            <person name="Galbiati F."/>
            <person name="Pignatiello C."/>
            <person name="Cabrera W."/>
            <person name="Ibanez O."/>
            <person name="Manenti G."/>
            <person name="Dragani T.A."/>
        </authorList>
    </citation>
    <scope>NUCLEOTIDE SEQUENCE [MRNA] (ISOFORMS 8 AND 9)</scope>
    <source>
        <strain>SWR/J</strain>
        <tissue>Lung</tissue>
    </source>
</reference>
<reference key="4">
    <citation type="journal article" date="2005" name="Science">
        <title>The transcriptional landscape of the mammalian genome.</title>
        <authorList>
            <person name="Carninci P."/>
            <person name="Kasukawa T."/>
            <person name="Katayama S."/>
            <person name="Gough J."/>
            <person name="Frith M.C."/>
            <person name="Maeda N."/>
            <person name="Oyama R."/>
            <person name="Ravasi T."/>
            <person name="Lenhard B."/>
            <person name="Wells C."/>
            <person name="Kodzius R."/>
            <person name="Shimokawa K."/>
            <person name="Bajic V.B."/>
            <person name="Brenner S.E."/>
            <person name="Batalov S."/>
            <person name="Forrest A.R."/>
            <person name="Zavolan M."/>
            <person name="Davis M.J."/>
            <person name="Wilming L.G."/>
            <person name="Aidinis V."/>
            <person name="Allen J.E."/>
            <person name="Ambesi-Impiombato A."/>
            <person name="Apweiler R."/>
            <person name="Aturaliya R.N."/>
            <person name="Bailey T.L."/>
            <person name="Bansal M."/>
            <person name="Baxter L."/>
            <person name="Beisel K.W."/>
            <person name="Bersano T."/>
            <person name="Bono H."/>
            <person name="Chalk A.M."/>
            <person name="Chiu K.P."/>
            <person name="Choudhary V."/>
            <person name="Christoffels A."/>
            <person name="Clutterbuck D.R."/>
            <person name="Crowe M.L."/>
            <person name="Dalla E."/>
            <person name="Dalrymple B.P."/>
            <person name="de Bono B."/>
            <person name="Della Gatta G."/>
            <person name="di Bernardo D."/>
            <person name="Down T."/>
            <person name="Engstrom P."/>
            <person name="Fagiolini M."/>
            <person name="Faulkner G."/>
            <person name="Fletcher C.F."/>
            <person name="Fukushima T."/>
            <person name="Furuno M."/>
            <person name="Futaki S."/>
            <person name="Gariboldi M."/>
            <person name="Georgii-Hemming P."/>
            <person name="Gingeras T.R."/>
            <person name="Gojobori T."/>
            <person name="Green R.E."/>
            <person name="Gustincich S."/>
            <person name="Harbers M."/>
            <person name="Hayashi Y."/>
            <person name="Hensch T.K."/>
            <person name="Hirokawa N."/>
            <person name="Hill D."/>
            <person name="Huminiecki L."/>
            <person name="Iacono M."/>
            <person name="Ikeo K."/>
            <person name="Iwama A."/>
            <person name="Ishikawa T."/>
            <person name="Jakt M."/>
            <person name="Kanapin A."/>
            <person name="Katoh M."/>
            <person name="Kawasawa Y."/>
            <person name="Kelso J."/>
            <person name="Kitamura H."/>
            <person name="Kitano H."/>
            <person name="Kollias G."/>
            <person name="Krishnan S.P."/>
            <person name="Kruger A."/>
            <person name="Kummerfeld S.K."/>
            <person name="Kurochkin I.V."/>
            <person name="Lareau L.F."/>
            <person name="Lazarevic D."/>
            <person name="Lipovich L."/>
            <person name="Liu J."/>
            <person name="Liuni S."/>
            <person name="McWilliam S."/>
            <person name="Madan Babu M."/>
            <person name="Madera M."/>
            <person name="Marchionni L."/>
            <person name="Matsuda H."/>
            <person name="Matsuzawa S."/>
            <person name="Miki H."/>
            <person name="Mignone F."/>
            <person name="Miyake S."/>
            <person name="Morris K."/>
            <person name="Mottagui-Tabar S."/>
            <person name="Mulder N."/>
            <person name="Nakano N."/>
            <person name="Nakauchi H."/>
            <person name="Ng P."/>
            <person name="Nilsson R."/>
            <person name="Nishiguchi S."/>
            <person name="Nishikawa S."/>
            <person name="Nori F."/>
            <person name="Ohara O."/>
            <person name="Okazaki Y."/>
            <person name="Orlando V."/>
            <person name="Pang K.C."/>
            <person name="Pavan W.J."/>
            <person name="Pavesi G."/>
            <person name="Pesole G."/>
            <person name="Petrovsky N."/>
            <person name="Piazza S."/>
            <person name="Reed J."/>
            <person name="Reid J.F."/>
            <person name="Ring B.Z."/>
            <person name="Ringwald M."/>
            <person name="Rost B."/>
            <person name="Ruan Y."/>
            <person name="Salzberg S.L."/>
            <person name="Sandelin A."/>
            <person name="Schneider C."/>
            <person name="Schoenbach C."/>
            <person name="Sekiguchi K."/>
            <person name="Semple C.A."/>
            <person name="Seno S."/>
            <person name="Sessa L."/>
            <person name="Sheng Y."/>
            <person name="Shibata Y."/>
            <person name="Shimada H."/>
            <person name="Shimada K."/>
            <person name="Silva D."/>
            <person name="Sinclair B."/>
            <person name="Sperling S."/>
            <person name="Stupka E."/>
            <person name="Sugiura K."/>
            <person name="Sultana R."/>
            <person name="Takenaka Y."/>
            <person name="Taki K."/>
            <person name="Tammoja K."/>
            <person name="Tan S.L."/>
            <person name="Tang S."/>
            <person name="Taylor M.S."/>
            <person name="Tegner J."/>
            <person name="Teichmann S.A."/>
            <person name="Ueda H.R."/>
            <person name="van Nimwegen E."/>
            <person name="Verardo R."/>
            <person name="Wei C.L."/>
            <person name="Yagi K."/>
            <person name="Yamanishi H."/>
            <person name="Zabarovsky E."/>
            <person name="Zhu S."/>
            <person name="Zimmer A."/>
            <person name="Hide W."/>
            <person name="Bult C."/>
            <person name="Grimmond S.M."/>
            <person name="Teasdale R.D."/>
            <person name="Liu E.T."/>
            <person name="Brusic V."/>
            <person name="Quackenbush J."/>
            <person name="Wahlestedt C."/>
            <person name="Mattick J.S."/>
            <person name="Hume D.A."/>
            <person name="Kai C."/>
            <person name="Sasaki D."/>
            <person name="Tomaru Y."/>
            <person name="Fukuda S."/>
            <person name="Kanamori-Katayama M."/>
            <person name="Suzuki M."/>
            <person name="Aoki J."/>
            <person name="Arakawa T."/>
            <person name="Iida J."/>
            <person name="Imamura K."/>
            <person name="Itoh M."/>
            <person name="Kato T."/>
            <person name="Kawaji H."/>
            <person name="Kawagashira N."/>
            <person name="Kawashima T."/>
            <person name="Kojima M."/>
            <person name="Kondo S."/>
            <person name="Konno H."/>
            <person name="Nakano K."/>
            <person name="Ninomiya N."/>
            <person name="Nishio T."/>
            <person name="Okada M."/>
            <person name="Plessy C."/>
            <person name="Shibata K."/>
            <person name="Shiraki T."/>
            <person name="Suzuki S."/>
            <person name="Tagami M."/>
            <person name="Waki K."/>
            <person name="Watahiki A."/>
            <person name="Okamura-Oho Y."/>
            <person name="Suzuki H."/>
            <person name="Kawai J."/>
            <person name="Hayashizaki Y."/>
        </authorList>
    </citation>
    <scope>NUCLEOTIDE SEQUENCE [LARGE SCALE MRNA] (ISOFORM 9)</scope>
    <source>
        <strain>C57BL/6J</strain>
        <tissue>Bone marrow</tissue>
        <tissue>Head</tissue>
    </source>
</reference>
<reference key="5">
    <citation type="submission" date="2005-07" db="EMBL/GenBank/DDBJ databases">
        <title>Cloning of mouse full open reading frames in Gateway(R) system entry vector (pDONR201).</title>
        <authorList>
            <person name="Ebert L."/>
            <person name="Muenstermann E."/>
            <person name="Schatten R."/>
            <person name="Henze S."/>
            <person name="Bohn E."/>
            <person name="Mollenhauer J."/>
            <person name="Wiemann S."/>
            <person name="Schick M."/>
            <person name="Korn B."/>
        </authorList>
    </citation>
    <scope>NUCLEOTIDE SEQUENCE [LARGE SCALE MRNA] (ISOFORM 9)</scope>
</reference>
<reference key="6">
    <citation type="journal article" date="2004" name="Genome Res.">
        <title>The status, quality, and expansion of the NIH full-length cDNA project: the Mammalian Gene Collection (MGC).</title>
        <authorList>
            <consortium name="The MGC Project Team"/>
        </authorList>
    </citation>
    <scope>NUCLEOTIDE SEQUENCE [LARGE SCALE MRNA] (ISOFORMS 2 AND 8)</scope>
    <scope>NUCLEOTIDE SEQUENCE [LARGE SCALE MRNA] OF 193-577 (ISOFORM 3)</scope>
    <source>
        <strain>C57BL/6J</strain>
        <strain>Czech II</strain>
        <strain>FVB/N</strain>
        <tissue>Eye</tissue>
        <tissue>Mammary tumor</tissue>
    </source>
</reference>
<name>ST7_MOUSE</name>
<gene>
    <name type="primary">St7</name>
</gene>
<comment type="subcellular location">
    <subcellularLocation>
        <location evidence="9">Membrane</location>
        <topology evidence="9">Multi-pass membrane protein</topology>
    </subcellularLocation>
</comment>
<comment type="alternative products">
    <event type="alternative splicing"/>
    <isoform>
        <id>Q99M96-1</id>
        <name>1</name>
        <sequence type="displayed"/>
    </isoform>
    <isoform>
        <id>Q99M96-2</id>
        <name>2</name>
        <sequence type="described" ref="VSP_034124"/>
    </isoform>
    <isoform>
        <id>Q99M96-3</id>
        <name>3</name>
        <sequence type="described" ref="VSP_034123"/>
    </isoform>
    <isoform>
        <id>Q99M96-4</id>
        <name>4</name>
        <sequence type="described" ref="VSP_034118 VSP_034123"/>
    </isoform>
    <isoform>
        <id>Q99M96-5</id>
        <name>5</name>
        <sequence type="described" ref="VSP_034118"/>
    </isoform>
    <isoform>
        <id>Q99M96-6</id>
        <name>6</name>
        <sequence type="described" ref="VSP_034120 VSP_034121"/>
    </isoform>
    <isoform>
        <id>Q99M96-7</id>
        <name>7</name>
        <sequence type="described" ref="VSP_034120 VSP_034121 VSP_034123"/>
    </isoform>
    <isoform>
        <id>Q99M96-8</id>
        <name>8</name>
        <sequence type="described" ref="VSP_034119 VSP_034122"/>
    </isoform>
    <isoform>
        <id>Q99M96-9</id>
        <name>9</name>
        <sequence type="described" ref="VSP_034119 VSP_034122 VSP_034123"/>
    </isoform>
</comment>
<comment type="similarity">
    <text evidence="9">Belongs to the ST7 family.</text>
</comment>
<comment type="sequence caution" evidence="9">
    <conflict type="erroneous initiation">
        <sequence resource="EMBL-CDS" id="AAH12719"/>
    </conflict>
</comment>
<evidence type="ECO:0000250" key="1">
    <source>
        <dbReference type="UniProtKB" id="Q9NRC1"/>
    </source>
</evidence>
<evidence type="ECO:0000255" key="2"/>
<evidence type="ECO:0000303" key="3">
    <source>
    </source>
</evidence>
<evidence type="ECO:0000303" key="4">
    <source>
    </source>
</evidence>
<evidence type="ECO:0000303" key="5">
    <source>
    </source>
</evidence>
<evidence type="ECO:0000303" key="6">
    <source>
    </source>
</evidence>
<evidence type="ECO:0000303" key="7">
    <source>
    </source>
</evidence>
<evidence type="ECO:0000303" key="8">
    <source ref="5"/>
</evidence>
<evidence type="ECO:0000305" key="9"/>
<organism>
    <name type="scientific">Mus musculus</name>
    <name type="common">Mouse</name>
    <dbReference type="NCBI Taxonomy" id="10090"/>
    <lineage>
        <taxon>Eukaryota</taxon>
        <taxon>Metazoa</taxon>
        <taxon>Chordata</taxon>
        <taxon>Craniata</taxon>
        <taxon>Vertebrata</taxon>
        <taxon>Euteleostomi</taxon>
        <taxon>Mammalia</taxon>
        <taxon>Eutheria</taxon>
        <taxon>Euarchontoglires</taxon>
        <taxon>Glires</taxon>
        <taxon>Rodentia</taxon>
        <taxon>Myomorpha</taxon>
        <taxon>Muroidea</taxon>
        <taxon>Muridae</taxon>
        <taxon>Murinae</taxon>
        <taxon>Mus</taxon>
        <taxon>Mus</taxon>
    </lineage>
</organism>
<sequence length="577" mass="66095">MAEAGAGFLEQLKSCIVWSWTYLWTVWFFLVLFLVYILRVPLRINDNLSTVSMFLNTLTPKFYVALTGTSSLISGLILIFEWWYFRKYGTSFIEQVSVSHLRPLLGGVDNNSSNNSNSSNGDSDSNRQSVSECKVWRNPLNLFRGAEYNRYTWVTGREPLTYYDMNLSAQDHQTFFTCDSDHLRPADAIMQKAWRERNPQARISAAHEALEINEIRSRVEVPLIASSTIWEIKLLPKCATAYILLAEEEATTIAEAEKLFKQALKAGDGCYRRSQQLQHHGSQYEAQHRRDTNVLVYIKRRLAMCARRLGRTREAVKMMRDLMKEFPLLSMFNIHENLLEALLELQAYADVQAVLAKYDDISLPKSATICYTAALLKARAVSDKFSPEAASRRGLSTAEMNAVEAIHRAVEFNPHVPKYLLEMKSLILPPEHILKRGDSEAIAYAFFHLAHWKRVEGALNLLHCTWEGTFRMIPYPLEKGHLFYPYPICTETADRELLPSFHEVSVYPKKELPFFILFTAGLCSFTAMLALLTHQFPELMGVFAKAFLSTLFAPLNFVMEKVESILPSSLWHQLTRI</sequence>
<dbReference type="EMBL" id="AF234885">
    <property type="protein sequence ID" value="AAF85948.1"/>
    <property type="molecule type" value="mRNA"/>
</dbReference>
<dbReference type="EMBL" id="AF234884">
    <property type="protein sequence ID" value="AAF85947.1"/>
    <property type="molecule type" value="mRNA"/>
</dbReference>
<dbReference type="EMBL" id="AY007792">
    <property type="protein sequence ID" value="AAG24458.1"/>
    <property type="molecule type" value="mRNA"/>
</dbReference>
<dbReference type="EMBL" id="AY007794">
    <property type="protein sequence ID" value="AAG24460.1"/>
    <property type="molecule type" value="mRNA"/>
</dbReference>
<dbReference type="EMBL" id="AY007795">
    <property type="protein sequence ID" value="AAG24461.1"/>
    <property type="molecule type" value="mRNA"/>
</dbReference>
<dbReference type="EMBL" id="AY007796">
    <property type="protein sequence ID" value="AAG24462.1"/>
    <property type="molecule type" value="mRNA"/>
</dbReference>
<dbReference type="EMBL" id="AY007797">
    <property type="protein sequence ID" value="AAG24463.1"/>
    <property type="molecule type" value="mRNA"/>
</dbReference>
<dbReference type="EMBL" id="AY007798">
    <property type="protein sequence ID" value="AAG24464.1"/>
    <property type="molecule type" value="mRNA"/>
</dbReference>
<dbReference type="EMBL" id="AY007799">
    <property type="protein sequence ID" value="AAG24465.1"/>
    <property type="molecule type" value="mRNA"/>
</dbReference>
<dbReference type="EMBL" id="AY551821">
    <property type="protein sequence ID" value="AAS59839.1"/>
    <property type="molecule type" value="mRNA"/>
</dbReference>
<dbReference type="EMBL" id="AY551822">
    <property type="protein sequence ID" value="AAS59840.1"/>
    <property type="molecule type" value="mRNA"/>
</dbReference>
<dbReference type="EMBL" id="AK132103">
    <property type="protein sequence ID" value="BAE20983.1"/>
    <property type="molecule type" value="mRNA"/>
</dbReference>
<dbReference type="EMBL" id="AK151550">
    <property type="protein sequence ID" value="BAE30495.1"/>
    <property type="molecule type" value="mRNA"/>
</dbReference>
<dbReference type="EMBL" id="CT010245">
    <property type="protein sequence ID" value="CAJ18453.1"/>
    <property type="molecule type" value="mRNA"/>
</dbReference>
<dbReference type="EMBL" id="BC012719">
    <property type="protein sequence ID" value="AAH12719.1"/>
    <property type="status" value="ALT_INIT"/>
    <property type="molecule type" value="mRNA"/>
</dbReference>
<dbReference type="EMBL" id="BC024652">
    <property type="protein sequence ID" value="AAH24652.1"/>
    <property type="molecule type" value="mRNA"/>
</dbReference>
<dbReference type="EMBL" id="BC108418">
    <property type="protein sequence ID" value="AAI08419.1"/>
    <property type="molecule type" value="mRNA"/>
</dbReference>
<dbReference type="CCDS" id="CCDS19927.1">
    <molecule id="Q99M96-8"/>
</dbReference>
<dbReference type="CCDS" id="CCDS39431.1">
    <molecule id="Q99M96-9"/>
</dbReference>
<dbReference type="CCDS" id="CCDS71728.1">
    <molecule id="Q99M96-1"/>
</dbReference>
<dbReference type="CCDS" id="CCDS71729.1">
    <molecule id="Q99M96-3"/>
</dbReference>
<dbReference type="CCDS" id="CCDS71730.1">
    <molecule id="Q99M96-6"/>
</dbReference>
<dbReference type="CCDS" id="CCDS71731.1">
    <molecule id="Q99M96-7"/>
</dbReference>
<dbReference type="CCDS" id="CCDS80490.1">
    <molecule id="Q99M96-2"/>
</dbReference>
<dbReference type="RefSeq" id="NP_001076784.1">
    <molecule id="Q99M96-9"/>
    <property type="nucleotide sequence ID" value="NM_001083315.2"/>
</dbReference>
<dbReference type="RefSeq" id="NP_001276553.1">
    <molecule id="Q99M96-1"/>
    <property type="nucleotide sequence ID" value="NM_001289624.1"/>
</dbReference>
<dbReference type="RefSeq" id="NP_001276554.1">
    <molecule id="Q99M96-2"/>
    <property type="nucleotide sequence ID" value="NM_001289625.1"/>
</dbReference>
<dbReference type="RefSeq" id="NP_001276555.1">
    <molecule id="Q99M96-3"/>
    <property type="nucleotide sequence ID" value="NM_001289626.1"/>
</dbReference>
<dbReference type="RefSeq" id="NP_001276556.1">
    <molecule id="Q99M96-6"/>
    <property type="nucleotide sequence ID" value="NM_001289627.1"/>
</dbReference>
<dbReference type="RefSeq" id="NP_001276558.1">
    <molecule id="Q99M96-7"/>
    <property type="nucleotide sequence ID" value="NM_001289629.1"/>
</dbReference>
<dbReference type="RefSeq" id="NP_071727.2">
    <molecule id="Q99M96-8"/>
    <property type="nucleotide sequence ID" value="NM_022332.3"/>
</dbReference>
<dbReference type="RefSeq" id="XP_011239376.1">
    <property type="nucleotide sequence ID" value="XM_011241074.1"/>
</dbReference>
<dbReference type="BioGRID" id="211039">
    <property type="interactions" value="2"/>
</dbReference>
<dbReference type="FunCoup" id="Q99M96">
    <property type="interactions" value="1892"/>
</dbReference>
<dbReference type="STRING" id="10090.ENSMUSP00000080341"/>
<dbReference type="GlyCosmos" id="Q99M96">
    <property type="glycosylation" value="1 site, No reported glycans"/>
</dbReference>
<dbReference type="GlyGen" id="Q99M96">
    <property type="glycosylation" value="1 site"/>
</dbReference>
<dbReference type="iPTMnet" id="Q99M96"/>
<dbReference type="PhosphoSitePlus" id="Q99M96"/>
<dbReference type="PaxDb" id="10090-ENSMUSP00000057326"/>
<dbReference type="ProteomicsDB" id="257433">
    <molecule id="Q99M96-1"/>
</dbReference>
<dbReference type="ProteomicsDB" id="257434">
    <molecule id="Q99M96-2"/>
</dbReference>
<dbReference type="ProteomicsDB" id="257435">
    <molecule id="Q99M96-3"/>
</dbReference>
<dbReference type="ProteomicsDB" id="257436">
    <molecule id="Q99M96-4"/>
</dbReference>
<dbReference type="ProteomicsDB" id="257437">
    <molecule id="Q99M96-5"/>
</dbReference>
<dbReference type="ProteomicsDB" id="257438">
    <molecule id="Q99M96-6"/>
</dbReference>
<dbReference type="ProteomicsDB" id="257439">
    <molecule id="Q99M96-7"/>
</dbReference>
<dbReference type="ProteomicsDB" id="257440">
    <molecule id="Q99M96-8"/>
</dbReference>
<dbReference type="ProteomicsDB" id="257441">
    <molecule id="Q99M96-9"/>
</dbReference>
<dbReference type="Pumba" id="Q99M96"/>
<dbReference type="Ensembl" id="ENSMUST00000000674.13">
    <molecule id="Q99M96-7"/>
    <property type="protein sequence ID" value="ENSMUSP00000000674.7"/>
    <property type="gene ID" value="ENSMUSG00000029534.18"/>
</dbReference>
<dbReference type="Ensembl" id="ENSMUST00000052113.12">
    <molecule id="Q99M96-3"/>
    <property type="protein sequence ID" value="ENSMUSP00000062886.6"/>
    <property type="gene ID" value="ENSMUSG00000029534.18"/>
</dbReference>
<dbReference type="Ensembl" id="ENSMUST00000053148.14">
    <molecule id="Q99M96-8"/>
    <property type="protein sequence ID" value="ENSMUSP00000057326.8"/>
    <property type="gene ID" value="ENSMUSG00000029534.18"/>
</dbReference>
<dbReference type="Ensembl" id="ENSMUST00000077080.9">
    <molecule id="Q99M96-6"/>
    <property type="protein sequence ID" value="ENSMUSP00000076334.3"/>
    <property type="gene ID" value="ENSMUSG00000029534.18"/>
</dbReference>
<dbReference type="Ensembl" id="ENSMUST00000081635.13">
    <molecule id="Q99M96-1"/>
    <property type="protein sequence ID" value="ENSMUSP00000080341.7"/>
    <property type="gene ID" value="ENSMUSG00000029534.18"/>
</dbReference>
<dbReference type="Ensembl" id="ENSMUST00000115417.4">
    <molecule id="Q99M96-9"/>
    <property type="protein sequence ID" value="ENSMUSP00000111077.4"/>
    <property type="gene ID" value="ENSMUSG00000029534.18"/>
</dbReference>
<dbReference type="Ensembl" id="ENSMUST00000115419.8">
    <molecule id="Q99M96-2"/>
    <property type="protein sequence ID" value="ENSMUSP00000111079.2"/>
    <property type="gene ID" value="ENSMUSG00000029534.18"/>
</dbReference>
<dbReference type="GeneID" id="64213"/>
<dbReference type="KEGG" id="mmu:64213"/>
<dbReference type="UCSC" id="uc009azu.2">
    <molecule id="Q99M96-2"/>
    <property type="organism name" value="mouse"/>
</dbReference>
<dbReference type="UCSC" id="uc009azv.2">
    <molecule id="Q99M96-1"/>
    <property type="organism name" value="mouse"/>
</dbReference>
<dbReference type="UCSC" id="uc009azx.2">
    <molecule id="Q99M96-7"/>
    <property type="organism name" value="mouse"/>
</dbReference>
<dbReference type="UCSC" id="uc009azy.2">
    <molecule id="Q99M96-6"/>
    <property type="organism name" value="mouse"/>
</dbReference>
<dbReference type="UCSC" id="uc009bac.2">
    <molecule id="Q99M96-8"/>
    <property type="organism name" value="mouse"/>
</dbReference>
<dbReference type="UCSC" id="uc009bae.2">
    <molecule id="Q99M96-9"/>
    <property type="organism name" value="mouse"/>
</dbReference>
<dbReference type="AGR" id="MGI:1927450"/>
<dbReference type="CTD" id="7982"/>
<dbReference type="MGI" id="MGI:1927450">
    <property type="gene designation" value="St7"/>
</dbReference>
<dbReference type="VEuPathDB" id="HostDB:ENSMUSG00000029534"/>
<dbReference type="eggNOG" id="KOG3807">
    <property type="taxonomic scope" value="Eukaryota"/>
</dbReference>
<dbReference type="GeneTree" id="ENSGT00390000000873"/>
<dbReference type="HOGENOM" id="CLU_035578_2_0_1"/>
<dbReference type="InParanoid" id="Q99M96"/>
<dbReference type="OMA" id="DRCATAY"/>
<dbReference type="OrthoDB" id="35535at9989"/>
<dbReference type="PhylomeDB" id="Q99M96"/>
<dbReference type="TreeFam" id="TF314162"/>
<dbReference type="BioGRID-ORCS" id="64213">
    <property type="hits" value="1 hit in 77 CRISPR screens"/>
</dbReference>
<dbReference type="ChiTaRS" id="St7">
    <property type="organism name" value="mouse"/>
</dbReference>
<dbReference type="PRO" id="PR:Q99M96"/>
<dbReference type="Proteomes" id="UP000000589">
    <property type="component" value="Chromosome 6"/>
</dbReference>
<dbReference type="RNAct" id="Q99M96">
    <property type="molecule type" value="protein"/>
</dbReference>
<dbReference type="Bgee" id="ENSMUSG00000029534">
    <property type="expression patterns" value="Expressed in saccule of membranous labyrinth and 226 other cell types or tissues"/>
</dbReference>
<dbReference type="ExpressionAtlas" id="Q99M96">
    <property type="expression patterns" value="baseline and differential"/>
</dbReference>
<dbReference type="GO" id="GO:0016020">
    <property type="term" value="C:membrane"/>
    <property type="evidence" value="ECO:0007669"/>
    <property type="project" value="UniProtKB-SubCell"/>
</dbReference>
<dbReference type="CDD" id="cd11557">
    <property type="entry name" value="ST7"/>
    <property type="match status" value="1"/>
</dbReference>
<dbReference type="InterPro" id="IPR007311">
    <property type="entry name" value="ST7"/>
</dbReference>
<dbReference type="PANTHER" id="PTHR12745">
    <property type="entry name" value="SUPPRESSION OF TUMORIGENICITY 7"/>
    <property type="match status" value="1"/>
</dbReference>
<dbReference type="PANTHER" id="PTHR12745:SF8">
    <property type="entry name" value="SUPPRESSOR OF TUMORIGENICITY 7 PROTEIN"/>
    <property type="match status" value="1"/>
</dbReference>
<dbReference type="Pfam" id="PF04184">
    <property type="entry name" value="ST7"/>
    <property type="match status" value="1"/>
</dbReference>